<gene>
    <name evidence="1" type="primary">accD</name>
    <name type="ordered locus">Sez_0416</name>
</gene>
<accession>B4U1C1</accession>
<protein>
    <recommendedName>
        <fullName evidence="1">Acetyl-coenzyme A carboxylase carboxyl transferase subunit beta</fullName>
        <shortName evidence="1">ACCase subunit beta</shortName>
        <shortName evidence="1">Acetyl-CoA carboxylase carboxyltransferase subunit beta</shortName>
        <ecNumber evidence="1">2.1.3.15</ecNumber>
    </recommendedName>
</protein>
<evidence type="ECO:0000255" key="1">
    <source>
        <dbReference type="HAMAP-Rule" id="MF_01395"/>
    </source>
</evidence>
<evidence type="ECO:0000255" key="2">
    <source>
        <dbReference type="PROSITE-ProRule" id="PRU01136"/>
    </source>
</evidence>
<sequence length="288" mass="31770">MALFSKKDKYIRITPNNSLKSSVSRNIPEVPDELFAKCPACKHMIYQKDLGPAKICPTCSYNFRISAQERLTLTVDEGSFQELFTDIETKDPLRFPGYQAKLQKARQATGLHEAVLTGTALVKGQRLALAIMDSHFIMASMGTVVGEKITRLFELAINERLPVIIFTASGGARMQEGIMSLMQMAKVSAAVKRHSNAGLFYLTILTDPTTGGVTASFAMEGDMIIAEPQSLVGFAGRRVIETTVRENLPDDFQKAEFLKEHGFVDAIVKRTDLRDRIAHLVAFHGGVS</sequence>
<proteinExistence type="inferred from homology"/>
<dbReference type="EC" id="2.1.3.15" evidence="1"/>
<dbReference type="EMBL" id="CP001129">
    <property type="protein sequence ID" value="ACG61788.1"/>
    <property type="molecule type" value="Genomic_DNA"/>
</dbReference>
<dbReference type="RefSeq" id="WP_012515064.1">
    <property type="nucleotide sequence ID" value="NC_011134.1"/>
</dbReference>
<dbReference type="SMR" id="B4U1C1"/>
<dbReference type="KEGG" id="sez:Sez_0416"/>
<dbReference type="HOGENOM" id="CLU_015486_1_1_9"/>
<dbReference type="UniPathway" id="UPA00655">
    <property type="reaction ID" value="UER00711"/>
</dbReference>
<dbReference type="Proteomes" id="UP000001873">
    <property type="component" value="Chromosome"/>
</dbReference>
<dbReference type="GO" id="GO:0009317">
    <property type="term" value="C:acetyl-CoA carboxylase complex"/>
    <property type="evidence" value="ECO:0007669"/>
    <property type="project" value="InterPro"/>
</dbReference>
<dbReference type="GO" id="GO:0003989">
    <property type="term" value="F:acetyl-CoA carboxylase activity"/>
    <property type="evidence" value="ECO:0007669"/>
    <property type="project" value="InterPro"/>
</dbReference>
<dbReference type="GO" id="GO:0005524">
    <property type="term" value="F:ATP binding"/>
    <property type="evidence" value="ECO:0007669"/>
    <property type="project" value="UniProtKB-KW"/>
</dbReference>
<dbReference type="GO" id="GO:0016743">
    <property type="term" value="F:carboxyl- or carbamoyltransferase activity"/>
    <property type="evidence" value="ECO:0007669"/>
    <property type="project" value="UniProtKB-UniRule"/>
</dbReference>
<dbReference type="GO" id="GO:0008270">
    <property type="term" value="F:zinc ion binding"/>
    <property type="evidence" value="ECO:0007669"/>
    <property type="project" value="UniProtKB-UniRule"/>
</dbReference>
<dbReference type="GO" id="GO:0006633">
    <property type="term" value="P:fatty acid biosynthetic process"/>
    <property type="evidence" value="ECO:0007669"/>
    <property type="project" value="UniProtKB-KW"/>
</dbReference>
<dbReference type="GO" id="GO:2001295">
    <property type="term" value="P:malonyl-CoA biosynthetic process"/>
    <property type="evidence" value="ECO:0007669"/>
    <property type="project" value="UniProtKB-UniRule"/>
</dbReference>
<dbReference type="Gene3D" id="3.90.226.10">
    <property type="entry name" value="2-enoyl-CoA Hydratase, Chain A, domain 1"/>
    <property type="match status" value="1"/>
</dbReference>
<dbReference type="HAMAP" id="MF_01395">
    <property type="entry name" value="AcetylCoA_CT_beta"/>
    <property type="match status" value="1"/>
</dbReference>
<dbReference type="InterPro" id="IPR034733">
    <property type="entry name" value="AcCoA_carboxyl_beta"/>
</dbReference>
<dbReference type="InterPro" id="IPR000438">
    <property type="entry name" value="Acetyl_CoA_COase_Trfase_b_su"/>
</dbReference>
<dbReference type="InterPro" id="IPR029045">
    <property type="entry name" value="ClpP/crotonase-like_dom_sf"/>
</dbReference>
<dbReference type="InterPro" id="IPR011762">
    <property type="entry name" value="COA_CT_N"/>
</dbReference>
<dbReference type="NCBIfam" id="TIGR00515">
    <property type="entry name" value="accD"/>
    <property type="match status" value="1"/>
</dbReference>
<dbReference type="PANTHER" id="PTHR42995">
    <property type="entry name" value="ACETYL-COENZYME A CARBOXYLASE CARBOXYL TRANSFERASE SUBUNIT BETA, CHLOROPLASTIC"/>
    <property type="match status" value="1"/>
</dbReference>
<dbReference type="PANTHER" id="PTHR42995:SF5">
    <property type="entry name" value="ACETYL-COENZYME A CARBOXYLASE CARBOXYL TRANSFERASE SUBUNIT BETA, CHLOROPLASTIC"/>
    <property type="match status" value="1"/>
</dbReference>
<dbReference type="Pfam" id="PF01039">
    <property type="entry name" value="Carboxyl_trans"/>
    <property type="match status" value="1"/>
</dbReference>
<dbReference type="PRINTS" id="PR01070">
    <property type="entry name" value="ACCCTRFRASEB"/>
</dbReference>
<dbReference type="SUPFAM" id="SSF52096">
    <property type="entry name" value="ClpP/crotonase"/>
    <property type="match status" value="1"/>
</dbReference>
<dbReference type="PROSITE" id="PS50980">
    <property type="entry name" value="COA_CT_NTER"/>
    <property type="match status" value="1"/>
</dbReference>
<reference key="1">
    <citation type="journal article" date="2008" name="PLoS ONE">
        <title>Genome sequence of a lancefield group C Streptococcus zooepidemicus strain causing epidemic nephritis: new information about an old disease.</title>
        <authorList>
            <person name="Beres S.B."/>
            <person name="Sesso R."/>
            <person name="Pinto S.W.L."/>
            <person name="Hoe N.P."/>
            <person name="Porcella S.F."/>
            <person name="Deleo F.R."/>
            <person name="Musser J.M."/>
        </authorList>
    </citation>
    <scope>NUCLEOTIDE SEQUENCE [LARGE SCALE GENOMIC DNA]</scope>
    <source>
        <strain>MGCS10565</strain>
    </source>
</reference>
<organism>
    <name type="scientific">Streptococcus equi subsp. zooepidemicus (strain MGCS10565)</name>
    <dbReference type="NCBI Taxonomy" id="552526"/>
    <lineage>
        <taxon>Bacteria</taxon>
        <taxon>Bacillati</taxon>
        <taxon>Bacillota</taxon>
        <taxon>Bacilli</taxon>
        <taxon>Lactobacillales</taxon>
        <taxon>Streptococcaceae</taxon>
        <taxon>Streptococcus</taxon>
    </lineage>
</organism>
<name>ACCD_STREM</name>
<keyword id="KW-0067">ATP-binding</keyword>
<keyword id="KW-0963">Cytoplasm</keyword>
<keyword id="KW-0275">Fatty acid biosynthesis</keyword>
<keyword id="KW-0276">Fatty acid metabolism</keyword>
<keyword id="KW-0444">Lipid biosynthesis</keyword>
<keyword id="KW-0443">Lipid metabolism</keyword>
<keyword id="KW-0479">Metal-binding</keyword>
<keyword id="KW-0547">Nucleotide-binding</keyword>
<keyword id="KW-0808">Transferase</keyword>
<keyword id="KW-0862">Zinc</keyword>
<keyword id="KW-0863">Zinc-finger</keyword>
<feature type="chain" id="PRO_0000389869" description="Acetyl-coenzyme A carboxylase carboxyl transferase subunit beta">
    <location>
        <begin position="1"/>
        <end position="288"/>
    </location>
</feature>
<feature type="domain" description="CoA carboxyltransferase N-terminal" evidence="2">
    <location>
        <begin position="34"/>
        <end position="288"/>
    </location>
</feature>
<feature type="zinc finger region" description="C4-type" evidence="1">
    <location>
        <begin position="38"/>
        <end position="59"/>
    </location>
</feature>
<feature type="binding site" evidence="1">
    <location>
        <position position="38"/>
    </location>
    <ligand>
        <name>Zn(2+)</name>
        <dbReference type="ChEBI" id="CHEBI:29105"/>
    </ligand>
</feature>
<feature type="binding site" evidence="1">
    <location>
        <position position="41"/>
    </location>
    <ligand>
        <name>Zn(2+)</name>
        <dbReference type="ChEBI" id="CHEBI:29105"/>
    </ligand>
</feature>
<feature type="binding site" evidence="1">
    <location>
        <position position="56"/>
    </location>
    <ligand>
        <name>Zn(2+)</name>
        <dbReference type="ChEBI" id="CHEBI:29105"/>
    </ligand>
</feature>
<feature type="binding site" evidence="1">
    <location>
        <position position="59"/>
    </location>
    <ligand>
        <name>Zn(2+)</name>
        <dbReference type="ChEBI" id="CHEBI:29105"/>
    </ligand>
</feature>
<comment type="function">
    <text evidence="1">Component of the acetyl coenzyme A carboxylase (ACC) complex. Biotin carboxylase (BC) catalyzes the carboxylation of biotin on its carrier protein (BCCP) and then the CO(2) group is transferred by the transcarboxylase to acetyl-CoA to form malonyl-CoA.</text>
</comment>
<comment type="catalytic activity">
    <reaction evidence="1">
        <text>N(6)-carboxybiotinyl-L-lysyl-[protein] + acetyl-CoA = N(6)-biotinyl-L-lysyl-[protein] + malonyl-CoA</text>
        <dbReference type="Rhea" id="RHEA:54728"/>
        <dbReference type="Rhea" id="RHEA-COMP:10505"/>
        <dbReference type="Rhea" id="RHEA-COMP:10506"/>
        <dbReference type="ChEBI" id="CHEBI:57288"/>
        <dbReference type="ChEBI" id="CHEBI:57384"/>
        <dbReference type="ChEBI" id="CHEBI:83144"/>
        <dbReference type="ChEBI" id="CHEBI:83145"/>
        <dbReference type="EC" id="2.1.3.15"/>
    </reaction>
</comment>
<comment type="cofactor">
    <cofactor evidence="1">
        <name>Zn(2+)</name>
        <dbReference type="ChEBI" id="CHEBI:29105"/>
    </cofactor>
    <text evidence="1">Binds 1 zinc ion per subunit.</text>
</comment>
<comment type="pathway">
    <text evidence="1">Lipid metabolism; malonyl-CoA biosynthesis; malonyl-CoA from acetyl-CoA: step 1/1.</text>
</comment>
<comment type="subunit">
    <text evidence="1">Acetyl-CoA carboxylase is a heterohexamer composed of biotin carboxyl carrier protein (AccB), biotin carboxylase (AccC) and two subunits each of ACCase subunit alpha (AccA) and ACCase subunit beta (AccD).</text>
</comment>
<comment type="subcellular location">
    <subcellularLocation>
        <location evidence="1">Cytoplasm</location>
    </subcellularLocation>
</comment>
<comment type="similarity">
    <text evidence="1">Belongs to the AccD/PCCB family.</text>
</comment>